<sequence>MARVKRAVNAHKKRRTVLKASKGYRGQRSRLYRKAKEQQLHSLGYAYRDRRARKGEFRKLWISRINAAARANDITYNRLIQGLKAADVDVDRKNLADIAISDPAAFTALVEVARSGLPEDVNVPSGEAA</sequence>
<feature type="chain" id="PRO_1000193970" description="Large ribosomal subunit protein bL20">
    <location>
        <begin position="1"/>
        <end position="129"/>
    </location>
</feature>
<evidence type="ECO:0000255" key="1">
    <source>
        <dbReference type="HAMAP-Rule" id="MF_00382"/>
    </source>
</evidence>
<evidence type="ECO:0000305" key="2"/>
<gene>
    <name evidence="1" type="primary">rplT</name>
    <name type="ordered locus">MLBr01396</name>
</gene>
<comment type="function">
    <text evidence="1">Binds directly to 23S ribosomal RNA and is necessary for the in vitro assembly process of the 50S ribosomal subunit. It is not involved in the protein synthesizing functions of that subunit.</text>
</comment>
<comment type="similarity">
    <text evidence="1">Belongs to the bacterial ribosomal protein bL20 family.</text>
</comment>
<name>RL20_MYCLB</name>
<accession>B8ZRJ7</accession>
<organism>
    <name type="scientific">Mycobacterium leprae (strain Br4923)</name>
    <dbReference type="NCBI Taxonomy" id="561304"/>
    <lineage>
        <taxon>Bacteria</taxon>
        <taxon>Bacillati</taxon>
        <taxon>Actinomycetota</taxon>
        <taxon>Actinomycetes</taxon>
        <taxon>Mycobacteriales</taxon>
        <taxon>Mycobacteriaceae</taxon>
        <taxon>Mycobacterium</taxon>
    </lineage>
</organism>
<dbReference type="EMBL" id="FM211192">
    <property type="protein sequence ID" value="CAR71491.1"/>
    <property type="molecule type" value="Genomic_DNA"/>
</dbReference>
<dbReference type="SMR" id="B8ZRJ7"/>
<dbReference type="KEGG" id="mlb:MLBr01396"/>
<dbReference type="HOGENOM" id="CLU_123265_0_0_11"/>
<dbReference type="Proteomes" id="UP000006900">
    <property type="component" value="Chromosome"/>
</dbReference>
<dbReference type="GO" id="GO:1990904">
    <property type="term" value="C:ribonucleoprotein complex"/>
    <property type="evidence" value="ECO:0007669"/>
    <property type="project" value="UniProtKB-KW"/>
</dbReference>
<dbReference type="GO" id="GO:0005840">
    <property type="term" value="C:ribosome"/>
    <property type="evidence" value="ECO:0007669"/>
    <property type="project" value="UniProtKB-KW"/>
</dbReference>
<dbReference type="GO" id="GO:0019843">
    <property type="term" value="F:rRNA binding"/>
    <property type="evidence" value="ECO:0007669"/>
    <property type="project" value="UniProtKB-UniRule"/>
</dbReference>
<dbReference type="GO" id="GO:0003735">
    <property type="term" value="F:structural constituent of ribosome"/>
    <property type="evidence" value="ECO:0007669"/>
    <property type="project" value="InterPro"/>
</dbReference>
<dbReference type="GO" id="GO:0000027">
    <property type="term" value="P:ribosomal large subunit assembly"/>
    <property type="evidence" value="ECO:0007669"/>
    <property type="project" value="UniProtKB-UniRule"/>
</dbReference>
<dbReference type="GO" id="GO:0006412">
    <property type="term" value="P:translation"/>
    <property type="evidence" value="ECO:0007669"/>
    <property type="project" value="InterPro"/>
</dbReference>
<dbReference type="CDD" id="cd07026">
    <property type="entry name" value="Ribosomal_L20"/>
    <property type="match status" value="1"/>
</dbReference>
<dbReference type="FunFam" id="1.10.1900.20:FF:000001">
    <property type="entry name" value="50S ribosomal protein L20"/>
    <property type="match status" value="1"/>
</dbReference>
<dbReference type="Gene3D" id="6.10.160.10">
    <property type="match status" value="1"/>
</dbReference>
<dbReference type="Gene3D" id="1.10.1900.20">
    <property type="entry name" value="Ribosomal protein L20"/>
    <property type="match status" value="1"/>
</dbReference>
<dbReference type="HAMAP" id="MF_00382">
    <property type="entry name" value="Ribosomal_bL20"/>
    <property type="match status" value="1"/>
</dbReference>
<dbReference type="InterPro" id="IPR005813">
    <property type="entry name" value="Ribosomal_bL20"/>
</dbReference>
<dbReference type="InterPro" id="IPR049946">
    <property type="entry name" value="RIBOSOMAL_L20_CS"/>
</dbReference>
<dbReference type="InterPro" id="IPR035566">
    <property type="entry name" value="Ribosomal_protein_bL20_C"/>
</dbReference>
<dbReference type="NCBIfam" id="TIGR01032">
    <property type="entry name" value="rplT_bact"/>
    <property type="match status" value="1"/>
</dbReference>
<dbReference type="PANTHER" id="PTHR10986">
    <property type="entry name" value="39S RIBOSOMAL PROTEIN L20"/>
    <property type="match status" value="1"/>
</dbReference>
<dbReference type="Pfam" id="PF00453">
    <property type="entry name" value="Ribosomal_L20"/>
    <property type="match status" value="1"/>
</dbReference>
<dbReference type="PRINTS" id="PR00062">
    <property type="entry name" value="RIBOSOMALL20"/>
</dbReference>
<dbReference type="SUPFAM" id="SSF74731">
    <property type="entry name" value="Ribosomal protein L20"/>
    <property type="match status" value="1"/>
</dbReference>
<dbReference type="PROSITE" id="PS00937">
    <property type="entry name" value="RIBOSOMAL_L20"/>
    <property type="match status" value="1"/>
</dbReference>
<protein>
    <recommendedName>
        <fullName evidence="1">Large ribosomal subunit protein bL20</fullName>
    </recommendedName>
    <alternativeName>
        <fullName evidence="2">50S ribosomal protein L20</fullName>
    </alternativeName>
</protein>
<proteinExistence type="inferred from homology"/>
<reference key="1">
    <citation type="journal article" date="2009" name="Nat. Genet.">
        <title>Comparative genomic and phylogeographic analysis of Mycobacterium leprae.</title>
        <authorList>
            <person name="Monot M."/>
            <person name="Honore N."/>
            <person name="Garnier T."/>
            <person name="Zidane N."/>
            <person name="Sherafi D."/>
            <person name="Paniz-Mondolfi A."/>
            <person name="Matsuoka M."/>
            <person name="Taylor G.M."/>
            <person name="Donoghue H.D."/>
            <person name="Bouwman A."/>
            <person name="Mays S."/>
            <person name="Watson C."/>
            <person name="Lockwood D."/>
            <person name="Khamispour A."/>
            <person name="Dowlati Y."/>
            <person name="Jianping S."/>
            <person name="Rea T.H."/>
            <person name="Vera-Cabrera L."/>
            <person name="Stefani M.M."/>
            <person name="Banu S."/>
            <person name="Macdonald M."/>
            <person name="Sapkota B.R."/>
            <person name="Spencer J.S."/>
            <person name="Thomas J."/>
            <person name="Harshman K."/>
            <person name="Singh P."/>
            <person name="Busso P."/>
            <person name="Gattiker A."/>
            <person name="Rougemont J."/>
            <person name="Brennan P.J."/>
            <person name="Cole S.T."/>
        </authorList>
    </citation>
    <scope>NUCLEOTIDE SEQUENCE [LARGE SCALE GENOMIC DNA]</scope>
    <source>
        <strain>Br4923</strain>
    </source>
</reference>
<keyword id="KW-0687">Ribonucleoprotein</keyword>
<keyword id="KW-0689">Ribosomal protein</keyword>
<keyword id="KW-0694">RNA-binding</keyword>
<keyword id="KW-0699">rRNA-binding</keyword>